<evidence type="ECO:0000255" key="1"/>
<evidence type="ECO:0000255" key="2">
    <source>
        <dbReference type="PROSITE-ProRule" id="PRU00722"/>
    </source>
</evidence>
<evidence type="ECO:0000269" key="3">
    <source>
    </source>
</evidence>
<evidence type="ECO:0000303" key="4">
    <source>
    </source>
</evidence>
<evidence type="ECO:0000305" key="5"/>
<evidence type="ECO:0000312" key="6">
    <source>
        <dbReference type="EMBL" id="BAC25022.1"/>
    </source>
</evidence>
<evidence type="ECO:0000312" key="7">
    <source>
        <dbReference type="EMBL" id="EDL15719.1"/>
    </source>
</evidence>
<evidence type="ECO:0000312" key="8">
    <source>
        <dbReference type="MGI" id="MGI:1913357"/>
    </source>
</evidence>
<evidence type="ECO:0000312" key="9">
    <source>
        <dbReference type="Proteomes" id="UP000000589"/>
    </source>
</evidence>
<feature type="signal peptide" evidence="1">
    <location>
        <begin position="1"/>
        <end position="24"/>
    </location>
</feature>
<feature type="chain" id="PRO_5005940237" description="Protein Wfdc21">
    <location>
        <begin position="25"/>
        <end position="63"/>
    </location>
</feature>
<feature type="domain" description="WAP; atypical" evidence="2">
    <location>
        <begin position="25"/>
        <end position="63"/>
    </location>
</feature>
<feature type="disulfide bond" evidence="2">
    <location>
        <begin position="35"/>
        <end position="56"/>
    </location>
</feature>
<feature type="disulfide bond" evidence="2">
    <location>
        <begin position="39"/>
        <end position="51"/>
    </location>
</feature>
<feature type="disulfide bond" evidence="2">
    <location>
        <begin position="45"/>
        <end position="60"/>
    </location>
</feature>
<dbReference type="EMBL" id="AK003164">
    <property type="protein sequence ID" value="BAC25022.1"/>
    <property type="molecule type" value="mRNA"/>
</dbReference>
<dbReference type="EMBL" id="AL663075">
    <property type="status" value="NOT_ANNOTATED_CDS"/>
    <property type="molecule type" value="Genomic_DNA"/>
</dbReference>
<dbReference type="EMBL" id="CH466556">
    <property type="protein sequence ID" value="EDL15719.1"/>
    <property type="molecule type" value="Genomic_DNA"/>
</dbReference>
<dbReference type="CCDS" id="CCDS36258.1"/>
<dbReference type="RefSeq" id="NP_899072.1">
    <property type="nucleotide sequence ID" value="NM_183249.2"/>
</dbReference>
<dbReference type="SMR" id="Q8BTE6"/>
<dbReference type="FunCoup" id="Q8BTE6">
    <property type="interactions" value="120"/>
</dbReference>
<dbReference type="STRING" id="10090.ENSMUSP00000064479"/>
<dbReference type="PaxDb" id="10090-ENSMUSP00000064479"/>
<dbReference type="PeptideAtlas" id="Q8BTE6"/>
<dbReference type="ProteomicsDB" id="299671"/>
<dbReference type="Ensembl" id="ENSMUST00000070832.3">
    <property type="protein sequence ID" value="ENSMUSP00000064479.3"/>
    <property type="gene ID" value="ENSMUSG00000051748.3"/>
</dbReference>
<dbReference type="GeneID" id="66107"/>
<dbReference type="KEGG" id="mmu:66107"/>
<dbReference type="UCSC" id="uc007kps.1">
    <property type="organism name" value="mouse"/>
</dbReference>
<dbReference type="AGR" id="MGI:1913357"/>
<dbReference type="CTD" id="66107"/>
<dbReference type="MGI" id="MGI:1913357">
    <property type="gene designation" value="Wfdc21"/>
</dbReference>
<dbReference type="VEuPathDB" id="HostDB:ENSMUSG00000051748"/>
<dbReference type="eggNOG" id="ENOG502TDX4">
    <property type="taxonomic scope" value="Eukaryota"/>
</dbReference>
<dbReference type="GeneTree" id="ENSGT00520000060616"/>
<dbReference type="HOGENOM" id="CLU_2885048_0_0_1"/>
<dbReference type="InParanoid" id="Q8BTE6"/>
<dbReference type="OMA" id="WDCGPGE"/>
<dbReference type="OrthoDB" id="9621563at2759"/>
<dbReference type="PhylomeDB" id="Q8BTE6"/>
<dbReference type="BioGRID-ORCS" id="66107">
    <property type="hits" value="3 hits in 73 CRISPR screens"/>
</dbReference>
<dbReference type="ChiTaRS" id="Wfdc21">
    <property type="organism name" value="mouse"/>
</dbReference>
<dbReference type="PRO" id="PR:Q8BTE6"/>
<dbReference type="Proteomes" id="UP000000589">
    <property type="component" value="Chromosome 11"/>
</dbReference>
<dbReference type="RNAct" id="Q8BTE6">
    <property type="molecule type" value="protein"/>
</dbReference>
<dbReference type="Bgee" id="ENSMUSG00000051748">
    <property type="expression patterns" value="Expressed in granulocyte and 93 other cell types or tissues"/>
</dbReference>
<dbReference type="GO" id="GO:0005615">
    <property type="term" value="C:extracellular space"/>
    <property type="evidence" value="ECO:0000314"/>
    <property type="project" value="MGI"/>
</dbReference>
<dbReference type="GO" id="GO:0008047">
    <property type="term" value="F:enzyme activator activity"/>
    <property type="evidence" value="ECO:0000314"/>
    <property type="project" value="MGI"/>
</dbReference>
<dbReference type="GO" id="GO:0030414">
    <property type="term" value="F:peptidase inhibitor activity"/>
    <property type="evidence" value="ECO:0007669"/>
    <property type="project" value="InterPro"/>
</dbReference>
<dbReference type="GO" id="GO:0032496">
    <property type="term" value="P:response to lipopolysaccharide"/>
    <property type="evidence" value="ECO:0000314"/>
    <property type="project" value="MGI"/>
</dbReference>
<dbReference type="GO" id="GO:0034612">
    <property type="term" value="P:response to tumor necrosis factor"/>
    <property type="evidence" value="ECO:0000314"/>
    <property type="project" value="MGI"/>
</dbReference>
<dbReference type="GO" id="GO:0050872">
    <property type="term" value="P:white fat cell differentiation"/>
    <property type="evidence" value="ECO:0000314"/>
    <property type="project" value="MGI"/>
</dbReference>
<dbReference type="Gene3D" id="4.10.75.10">
    <property type="entry name" value="Elafin-like"/>
    <property type="match status" value="1"/>
</dbReference>
<dbReference type="InterPro" id="IPR036645">
    <property type="entry name" value="Elafin-like_sf"/>
</dbReference>
<dbReference type="InterPro" id="IPR008197">
    <property type="entry name" value="WAP_dom"/>
</dbReference>
<dbReference type="Pfam" id="PF00095">
    <property type="entry name" value="WAP"/>
    <property type="match status" value="1"/>
</dbReference>
<dbReference type="SUPFAM" id="SSF57256">
    <property type="entry name" value="Elafin-like"/>
    <property type="match status" value="1"/>
</dbReference>
<organism>
    <name type="scientific">Mus musculus</name>
    <name type="common">Mouse</name>
    <dbReference type="NCBI Taxonomy" id="10090"/>
    <lineage>
        <taxon>Eukaryota</taxon>
        <taxon>Metazoa</taxon>
        <taxon>Chordata</taxon>
        <taxon>Craniata</taxon>
        <taxon>Vertebrata</taxon>
        <taxon>Euteleostomi</taxon>
        <taxon>Mammalia</taxon>
        <taxon>Eutheria</taxon>
        <taxon>Euarchontoglires</taxon>
        <taxon>Glires</taxon>
        <taxon>Rodentia</taxon>
        <taxon>Myomorpha</taxon>
        <taxon>Muroidea</taxon>
        <taxon>Muridae</taxon>
        <taxon>Murinae</taxon>
        <taxon>Mus</taxon>
        <taxon>Mus</taxon>
    </lineage>
</organism>
<sequence length="63" mass="6792">MKLGAFLLLVSLITLSLEVQELQAAVRPLQLLGTCAELCRGDWDCGPEEQCVSIGCSHICTTN</sequence>
<proteinExistence type="evidence at transcript level"/>
<protein>
    <recommendedName>
        <fullName evidence="5">Protein Wfdc21</fullName>
    </recommendedName>
    <alternativeName>
        <fullName evidence="4">Wdnm1-like protein</fullName>
    </alternativeName>
</protein>
<reference evidence="6" key="1">
    <citation type="journal article" date="2005" name="Science">
        <title>The transcriptional landscape of the mammalian genome.</title>
        <authorList>
            <person name="Carninci P."/>
            <person name="Kasukawa T."/>
            <person name="Katayama S."/>
            <person name="Gough J."/>
            <person name="Frith M.C."/>
            <person name="Maeda N."/>
            <person name="Oyama R."/>
            <person name="Ravasi T."/>
            <person name="Lenhard B."/>
            <person name="Wells C."/>
            <person name="Kodzius R."/>
            <person name="Shimokawa K."/>
            <person name="Bajic V.B."/>
            <person name="Brenner S.E."/>
            <person name="Batalov S."/>
            <person name="Forrest A.R."/>
            <person name="Zavolan M."/>
            <person name="Davis M.J."/>
            <person name="Wilming L.G."/>
            <person name="Aidinis V."/>
            <person name="Allen J.E."/>
            <person name="Ambesi-Impiombato A."/>
            <person name="Apweiler R."/>
            <person name="Aturaliya R.N."/>
            <person name="Bailey T.L."/>
            <person name="Bansal M."/>
            <person name="Baxter L."/>
            <person name="Beisel K.W."/>
            <person name="Bersano T."/>
            <person name="Bono H."/>
            <person name="Chalk A.M."/>
            <person name="Chiu K.P."/>
            <person name="Choudhary V."/>
            <person name="Christoffels A."/>
            <person name="Clutterbuck D.R."/>
            <person name="Crowe M.L."/>
            <person name="Dalla E."/>
            <person name="Dalrymple B.P."/>
            <person name="de Bono B."/>
            <person name="Della Gatta G."/>
            <person name="di Bernardo D."/>
            <person name="Down T."/>
            <person name="Engstrom P."/>
            <person name="Fagiolini M."/>
            <person name="Faulkner G."/>
            <person name="Fletcher C.F."/>
            <person name="Fukushima T."/>
            <person name="Furuno M."/>
            <person name="Futaki S."/>
            <person name="Gariboldi M."/>
            <person name="Georgii-Hemming P."/>
            <person name="Gingeras T.R."/>
            <person name="Gojobori T."/>
            <person name="Green R.E."/>
            <person name="Gustincich S."/>
            <person name="Harbers M."/>
            <person name="Hayashi Y."/>
            <person name="Hensch T.K."/>
            <person name="Hirokawa N."/>
            <person name="Hill D."/>
            <person name="Huminiecki L."/>
            <person name="Iacono M."/>
            <person name="Ikeo K."/>
            <person name="Iwama A."/>
            <person name="Ishikawa T."/>
            <person name="Jakt M."/>
            <person name="Kanapin A."/>
            <person name="Katoh M."/>
            <person name="Kawasawa Y."/>
            <person name="Kelso J."/>
            <person name="Kitamura H."/>
            <person name="Kitano H."/>
            <person name="Kollias G."/>
            <person name="Krishnan S.P."/>
            <person name="Kruger A."/>
            <person name="Kummerfeld S.K."/>
            <person name="Kurochkin I.V."/>
            <person name="Lareau L.F."/>
            <person name="Lazarevic D."/>
            <person name="Lipovich L."/>
            <person name="Liu J."/>
            <person name="Liuni S."/>
            <person name="McWilliam S."/>
            <person name="Madan Babu M."/>
            <person name="Madera M."/>
            <person name="Marchionni L."/>
            <person name="Matsuda H."/>
            <person name="Matsuzawa S."/>
            <person name="Miki H."/>
            <person name="Mignone F."/>
            <person name="Miyake S."/>
            <person name="Morris K."/>
            <person name="Mottagui-Tabar S."/>
            <person name="Mulder N."/>
            <person name="Nakano N."/>
            <person name="Nakauchi H."/>
            <person name="Ng P."/>
            <person name="Nilsson R."/>
            <person name="Nishiguchi S."/>
            <person name="Nishikawa S."/>
            <person name="Nori F."/>
            <person name="Ohara O."/>
            <person name="Okazaki Y."/>
            <person name="Orlando V."/>
            <person name="Pang K.C."/>
            <person name="Pavan W.J."/>
            <person name="Pavesi G."/>
            <person name="Pesole G."/>
            <person name="Petrovsky N."/>
            <person name="Piazza S."/>
            <person name="Reed J."/>
            <person name="Reid J.F."/>
            <person name="Ring B.Z."/>
            <person name="Ringwald M."/>
            <person name="Rost B."/>
            <person name="Ruan Y."/>
            <person name="Salzberg S.L."/>
            <person name="Sandelin A."/>
            <person name="Schneider C."/>
            <person name="Schoenbach C."/>
            <person name="Sekiguchi K."/>
            <person name="Semple C.A."/>
            <person name="Seno S."/>
            <person name="Sessa L."/>
            <person name="Sheng Y."/>
            <person name="Shibata Y."/>
            <person name="Shimada H."/>
            <person name="Shimada K."/>
            <person name="Silva D."/>
            <person name="Sinclair B."/>
            <person name="Sperling S."/>
            <person name="Stupka E."/>
            <person name="Sugiura K."/>
            <person name="Sultana R."/>
            <person name="Takenaka Y."/>
            <person name="Taki K."/>
            <person name="Tammoja K."/>
            <person name="Tan S.L."/>
            <person name="Tang S."/>
            <person name="Taylor M.S."/>
            <person name="Tegner J."/>
            <person name="Teichmann S.A."/>
            <person name="Ueda H.R."/>
            <person name="van Nimwegen E."/>
            <person name="Verardo R."/>
            <person name="Wei C.L."/>
            <person name="Yagi K."/>
            <person name="Yamanishi H."/>
            <person name="Zabarovsky E."/>
            <person name="Zhu S."/>
            <person name="Zimmer A."/>
            <person name="Hide W."/>
            <person name="Bult C."/>
            <person name="Grimmond S.M."/>
            <person name="Teasdale R.D."/>
            <person name="Liu E.T."/>
            <person name="Brusic V."/>
            <person name="Quackenbush J."/>
            <person name="Wahlestedt C."/>
            <person name="Mattick J.S."/>
            <person name="Hume D.A."/>
            <person name="Kai C."/>
            <person name="Sasaki D."/>
            <person name="Tomaru Y."/>
            <person name="Fukuda S."/>
            <person name="Kanamori-Katayama M."/>
            <person name="Suzuki M."/>
            <person name="Aoki J."/>
            <person name="Arakawa T."/>
            <person name="Iida J."/>
            <person name="Imamura K."/>
            <person name="Itoh M."/>
            <person name="Kato T."/>
            <person name="Kawaji H."/>
            <person name="Kawagashira N."/>
            <person name="Kawashima T."/>
            <person name="Kojima M."/>
            <person name="Kondo S."/>
            <person name="Konno H."/>
            <person name="Nakano K."/>
            <person name="Ninomiya N."/>
            <person name="Nishio T."/>
            <person name="Okada M."/>
            <person name="Plessy C."/>
            <person name="Shibata K."/>
            <person name="Shiraki T."/>
            <person name="Suzuki S."/>
            <person name="Tagami M."/>
            <person name="Waki K."/>
            <person name="Watahiki A."/>
            <person name="Okamura-Oho Y."/>
            <person name="Suzuki H."/>
            <person name="Kawai J."/>
            <person name="Hayashizaki Y."/>
        </authorList>
    </citation>
    <scope>NUCLEOTIDE SEQUENCE [LARGE SCALE MRNA]</scope>
    <source>
        <strain>C57BL/6J</strain>
    </source>
</reference>
<reference evidence="9" key="2">
    <citation type="journal article" date="2009" name="PLoS Biol.">
        <title>Lineage-specific biology revealed by a finished genome assembly of the mouse.</title>
        <authorList>
            <person name="Church D.M."/>
            <person name="Goodstadt L."/>
            <person name="Hillier L.W."/>
            <person name="Zody M.C."/>
            <person name="Goldstein S."/>
            <person name="She X."/>
            <person name="Bult C.J."/>
            <person name="Agarwala R."/>
            <person name="Cherry J.L."/>
            <person name="DiCuccio M."/>
            <person name="Hlavina W."/>
            <person name="Kapustin Y."/>
            <person name="Meric P."/>
            <person name="Maglott D."/>
            <person name="Birtle Z."/>
            <person name="Marques A.C."/>
            <person name="Graves T."/>
            <person name="Zhou S."/>
            <person name="Teague B."/>
            <person name="Potamousis K."/>
            <person name="Churas C."/>
            <person name="Place M."/>
            <person name="Herschleb J."/>
            <person name="Runnheim R."/>
            <person name="Forrest D."/>
            <person name="Amos-Landgraf J."/>
            <person name="Schwartz D.C."/>
            <person name="Cheng Z."/>
            <person name="Lindblad-Toh K."/>
            <person name="Eichler E.E."/>
            <person name="Ponting C.P."/>
        </authorList>
    </citation>
    <scope>NUCLEOTIDE SEQUENCE [LARGE SCALE GENOMIC DNA]</scope>
    <source>
        <strain>C57BL/6J</strain>
    </source>
</reference>
<reference evidence="7" key="3">
    <citation type="submission" date="2005-08" db="EMBL/GenBank/DDBJ databases">
        <authorList>
            <person name="Mural R.J."/>
            <person name="Adams M.D."/>
            <person name="Myers E.W."/>
            <person name="Smith H.O."/>
            <person name="Venter J.C."/>
        </authorList>
    </citation>
    <scope>NUCLEOTIDE SEQUENCE [LARGE SCALE GENOMIC DNA]</scope>
</reference>
<reference key="4">
    <citation type="journal article" date="2008" name="Am. J. Physiol.">
        <title>Wdnm1-like, a new adipokine with a role in MMP-2 activation.</title>
        <authorList>
            <person name="Wu Y."/>
            <person name="Smas C.M."/>
        </authorList>
    </citation>
    <scope>FUNCTION</scope>
    <scope>SUBCELLULAR LOCATION</scope>
    <scope>TISSUE SPECIFICITY</scope>
    <scope>INDUCTION</scope>
</reference>
<comment type="function">
    <text evidence="3">May promote activation of the metalloproteinase MMP2.</text>
</comment>
<comment type="subcellular location">
    <subcellularLocation>
        <location evidence="3">Secreted</location>
    </subcellularLocation>
</comment>
<comment type="tissue specificity">
    <text evidence="3">Predominantly expressed in white adipose tissue and liver.</text>
</comment>
<comment type="induction">
    <text evidence="3">Up-regulated by TNF-alpha and lipopolysaccharide (LPS) in vitro.</text>
</comment>
<gene>
    <name evidence="8" type="primary">Wfdc21</name>
    <name evidence="4" type="synonym">Wdnml1</name>
</gene>
<name>WFD21_MOUSE</name>
<keyword id="KW-1015">Disulfide bond</keyword>
<keyword id="KW-1185">Reference proteome</keyword>
<keyword id="KW-0964">Secreted</keyword>
<keyword id="KW-0732">Signal</keyword>
<accession>Q8BTE6</accession>